<keyword id="KW-0143">Chaperone</keyword>
<keyword id="KW-1029">Fimbrium biogenesis</keyword>
<proteinExistence type="inferred from homology"/>
<evidence type="ECO:0000250" key="1"/>
<evidence type="ECO:0000305" key="2"/>
<comment type="function">
    <text evidence="1">Could be required for the biogenesis of a putative fimbria.</text>
</comment>
<comment type="similarity">
    <text evidence="2">Belongs to the periplasmic pilus chaperone family.</text>
</comment>
<organism>
    <name type="scientific">Escherichia coli</name>
    <dbReference type="NCBI Taxonomy" id="562"/>
    <lineage>
        <taxon>Bacteria</taxon>
        <taxon>Pseudomonadati</taxon>
        <taxon>Pseudomonadota</taxon>
        <taxon>Gammaproteobacteria</taxon>
        <taxon>Enterobacterales</taxon>
        <taxon>Enterobacteriaceae</taxon>
        <taxon>Escherichia</taxon>
    </lineage>
</organism>
<protein>
    <recommendedName>
        <fullName>Protein FasC</fullName>
    </recommendedName>
</protein>
<reference key="1">
    <citation type="submission" date="1996-03" db="EMBL/GenBank/DDBJ databases">
        <authorList>
            <person name="Schifferli D.M."/>
        </authorList>
    </citation>
    <scope>NUCLEOTIDE SEQUENCE [GENOMIC DNA]</scope>
    <source>
        <strain>987 / ETEC</strain>
    </source>
</reference>
<reference key="2">
    <citation type="journal article" date="1994" name="J. Bacteriol.">
        <title>Permissive linker insertion sites in the outer membrane protein of 987P fimbriae of Escherichia coli.</title>
        <authorList>
            <person name="Schifferli D.M."/>
            <person name="Alrutz M.A."/>
        </authorList>
    </citation>
    <scope>NUCLEOTIDE SEQUENCE [GENOMIC DNA] OF 103-154</scope>
    <source>
        <strain>987 / ETEC</strain>
    </source>
</reference>
<name>FASC_ECOLX</name>
<gene>
    <name type="primary">fasC</name>
</gene>
<sequence>MIMGQLMNMRELFNKKKLHALVFSMWCVNLHASSLSDGIAIEPFEINAKSNRFVEFKVYNNTDEDYIVTQKVVSEENSIKKAKIPFVVNPPIRLLRKRSDAAMGIIYLNEGEVFDKKRKYYLSVSFIPKKKDSDDLGFNIIFTQQIAVKLSALN</sequence>
<feature type="chain" id="PRO_0000208271" description="Protein FasC">
    <location>
        <begin position="1"/>
        <end position="154"/>
    </location>
</feature>
<accession>P45999</accession>
<dbReference type="EMBL" id="U50547">
    <property type="protein sequence ID" value="AAB02686.1"/>
    <property type="molecule type" value="Genomic_DNA"/>
</dbReference>
<dbReference type="EMBL" id="L22659">
    <property type="protein sequence ID" value="AAA21826.1"/>
    <property type="molecule type" value="Genomic_DNA"/>
</dbReference>
<dbReference type="RefSeq" id="WP_077879664.1">
    <property type="nucleotide sequence ID" value="NZ_UCZI01000041.1"/>
</dbReference>
<dbReference type="SMR" id="P45999"/>
<dbReference type="GO" id="GO:0030288">
    <property type="term" value="C:outer membrane-bounded periplasmic space"/>
    <property type="evidence" value="ECO:0007669"/>
    <property type="project" value="InterPro"/>
</dbReference>
<dbReference type="GO" id="GO:0071555">
    <property type="term" value="P:cell wall organization"/>
    <property type="evidence" value="ECO:0007669"/>
    <property type="project" value="InterPro"/>
</dbReference>
<dbReference type="Gene3D" id="2.60.40.10">
    <property type="entry name" value="Immunoglobulins"/>
    <property type="match status" value="1"/>
</dbReference>
<dbReference type="InterPro" id="IPR013783">
    <property type="entry name" value="Ig-like_fold"/>
</dbReference>
<dbReference type="InterPro" id="IPR008962">
    <property type="entry name" value="PapD-like_sf"/>
</dbReference>
<dbReference type="InterPro" id="IPR016147">
    <property type="entry name" value="Pili_assmbl_chaperone_N"/>
</dbReference>
<dbReference type="Pfam" id="PF00345">
    <property type="entry name" value="PapD_N"/>
    <property type="match status" value="1"/>
</dbReference>
<dbReference type="SUPFAM" id="SSF49354">
    <property type="entry name" value="PapD-like"/>
    <property type="match status" value="1"/>
</dbReference>